<proteinExistence type="evidence at protein level"/>
<name>NLEF_ECO57</name>
<organism>
    <name type="scientific">Escherichia coli O157:H7</name>
    <dbReference type="NCBI Taxonomy" id="83334"/>
    <lineage>
        <taxon>Bacteria</taxon>
        <taxon>Pseudomonadati</taxon>
        <taxon>Pseudomonadota</taxon>
        <taxon>Gammaproteobacteria</taxon>
        <taxon>Enterobacterales</taxon>
        <taxon>Enterobacteriaceae</taxon>
        <taxon>Escherichia</taxon>
    </lineage>
</organism>
<evidence type="ECO:0000269" key="1">
    <source>
    </source>
</evidence>
<evidence type="ECO:0000269" key="2">
    <source>
    </source>
</evidence>
<evidence type="ECO:0007829" key="3">
    <source>
        <dbReference type="PDB" id="3V3K"/>
    </source>
</evidence>
<comment type="function">
    <text evidence="1 2">Effector protein that alters host cell physiology and promotes bacterial survival in host tissues. Inhibits the catalytic activity of human CASP4, CASP8 and CASP9, and thereby inhibits apoptosis of infected host cells.</text>
</comment>
<comment type="subunit">
    <text evidence="2">Monomer. Interacts (via C-terminus) with human CASP4, CASP8 and CASP9.</text>
</comment>
<comment type="interaction">
    <interactant intactId="EBI-10039292">
        <id>Q8XAL7</id>
    </interactant>
    <interactant intactId="EBI-516799">
        <id>P55211</id>
        <label>CASP9</label>
    </interactant>
    <organismsDiffer>true</organismsDiffer>
    <experiments>6</experiments>
</comment>
<comment type="interaction">
    <interactant intactId="EBI-10039292">
        <id>Q8XAL7</id>
    </interactant>
    <interactant intactId="EBI-998422">
        <id>P49755</id>
        <label>TMED10</label>
    </interactant>
    <organismsDiffer>true</organismsDiffer>
    <experiments>6</experiments>
</comment>
<comment type="subcellular location">
    <subcellularLocation>
        <location evidence="1">Secreted</location>
    </subcellularLocation>
    <subcellularLocation>
        <location evidence="1">Host cytoplasm</location>
    </subcellularLocation>
    <text>Injected into host cells via a type III secretion system.</text>
</comment>
<dbReference type="EMBL" id="AE005174">
    <property type="protein sequence ID" value="AAK16936.1"/>
    <property type="molecule type" value="Genomic_DNA"/>
</dbReference>
<dbReference type="EMBL" id="BA000007">
    <property type="protein sequence ID" value="BAB35238.1"/>
    <property type="molecule type" value="Genomic_DNA"/>
</dbReference>
<dbReference type="PIR" id="G90855">
    <property type="entry name" value="G90855"/>
</dbReference>
<dbReference type="RefSeq" id="NP_309842.1">
    <property type="nucleotide sequence ID" value="NC_002695.1"/>
</dbReference>
<dbReference type="RefSeq" id="WP_000938103.1">
    <property type="nucleotide sequence ID" value="NZ_VOAI01000064.1"/>
</dbReference>
<dbReference type="PDB" id="3V3K">
    <property type="method" value="X-ray"/>
    <property type="resolution" value="3.49 A"/>
    <property type="chains" value="B/D/F/H/J/L/N/P=25-189"/>
</dbReference>
<dbReference type="PDBsum" id="3V3K"/>
<dbReference type="SMR" id="Q8XAL7"/>
<dbReference type="IntAct" id="Q8XAL7">
    <property type="interactions" value="11"/>
</dbReference>
<dbReference type="MINT" id="Q8XAL7"/>
<dbReference type="STRING" id="155864.Z6020"/>
<dbReference type="GeneID" id="912903"/>
<dbReference type="KEGG" id="ece:Z6020"/>
<dbReference type="KEGG" id="ecs:ECs_1815"/>
<dbReference type="PATRIC" id="fig|83334.175.peg.4904"/>
<dbReference type="HOGENOM" id="CLU_1432549_0_0_6"/>
<dbReference type="OMA" id="YSWMYIS"/>
<dbReference type="Proteomes" id="UP000000558">
    <property type="component" value="Chromosome"/>
</dbReference>
<dbReference type="Proteomes" id="UP000002519">
    <property type="component" value="Chromosome"/>
</dbReference>
<dbReference type="GO" id="GO:0005576">
    <property type="term" value="C:extracellular region"/>
    <property type="evidence" value="ECO:0007669"/>
    <property type="project" value="UniProtKB-SubCell"/>
</dbReference>
<dbReference type="GO" id="GO:0030430">
    <property type="term" value="C:host cell cytoplasm"/>
    <property type="evidence" value="ECO:0007669"/>
    <property type="project" value="UniProtKB-SubCell"/>
</dbReference>
<dbReference type="GO" id="GO:0030414">
    <property type="term" value="F:peptidase inhibitor activity"/>
    <property type="evidence" value="ECO:0007669"/>
    <property type="project" value="UniProtKB-KW"/>
</dbReference>
<dbReference type="Gene3D" id="1.20.1260.90">
    <property type="match status" value="1"/>
</dbReference>
<dbReference type="InterPro" id="IPR031829">
    <property type="entry name" value="NleF"/>
</dbReference>
<dbReference type="InterPro" id="IPR038334">
    <property type="entry name" value="NleF_sf"/>
</dbReference>
<dbReference type="Pfam" id="PF16809">
    <property type="entry name" value="NleF_casp_inhib"/>
    <property type="match status" value="1"/>
</dbReference>
<sequence>MLPTSGSSANLYSWMYVSGRGNPSTPESVSELNHNHFLSPELQDKLDVMVSIYSCARNNNELEEIFQELSAFVSGLMDKRNSVFEVRNENTDEVVGALRAGMTIEDRDSYIRDLFFLHSLKVKIEESRQGKEDSKCKVYNLLCPHHSSELYGDLRAMKCLVEGCSDDFNPFDIIRVPDLTYNKGSLQCG</sequence>
<feature type="chain" id="PRO_0000422160" description="Effector protein NleF">
    <location>
        <begin position="1"/>
        <end position="189"/>
    </location>
</feature>
<feature type="region of interest" description="Interaction with host caspases">
    <location>
        <begin position="186"/>
        <end position="189"/>
    </location>
</feature>
<feature type="mutagenesis site" description="Abolishes caspase-binding and inhibition of host cell apoptosis.">
    <location>
        <begin position="186"/>
        <end position="189"/>
    </location>
</feature>
<feature type="mutagenesis site" description="Abolishes interaction with CASP4 and CASP8. Strongly reduces CASP9 binding. Reduces inhibition of host cell apoptosis.">
    <original>L</original>
    <variation>A</variation>
    <location>
        <position position="186"/>
    </location>
</feature>
<feature type="mutagenesis site" description="Abolishes caspase-binding. Reduces inhibition of host cell apoptosis.">
    <original>Q</original>
    <variation>A</variation>
    <location>
        <position position="187"/>
    </location>
</feature>
<feature type="mutagenesis site" description="Strongly reduces interaction with CASP4 and abolishes interaction with CASP8. Reduces interaction with CASP9. Reduces inhibition of host cell apoptosis.">
    <original>C</original>
    <variation>A</variation>
    <location>
        <position position="188"/>
    </location>
</feature>
<feature type="mutagenesis site" description="Abolishes interaction with CASP4 and CASP8. Strongly reduces CASP9 binding. Reduces inhibition of host cell apoptosis." evidence="2">
    <original>G</original>
    <variation>A</variation>
    <location>
        <position position="189"/>
    </location>
</feature>
<feature type="mutagenesis site" description="Abolishes caspase-binding and inhibition of host cell apoptosis." evidence="2">
    <original>G</original>
    <variation>GA</variation>
    <location>
        <position position="189"/>
    </location>
</feature>
<feature type="mutagenesis site" description="Abolishes interaction with CASP4 and CASP8. Strongly reduces CASP9 binding. Reduces inhibition of host cell apoptosis." evidence="2">
    <location>
        <position position="189"/>
    </location>
</feature>
<feature type="helix" evidence="3">
    <location>
        <begin position="34"/>
        <end position="36"/>
    </location>
</feature>
<feature type="helix" evidence="3">
    <location>
        <begin position="40"/>
        <end position="55"/>
    </location>
</feature>
<feature type="turn" evidence="3">
    <location>
        <begin position="59"/>
        <end position="62"/>
    </location>
</feature>
<feature type="helix" evidence="3">
    <location>
        <begin position="63"/>
        <end position="83"/>
    </location>
</feature>
<feature type="strand" evidence="3">
    <location>
        <begin position="84"/>
        <end position="88"/>
    </location>
</feature>
<feature type="strand" evidence="3">
    <location>
        <begin position="95"/>
        <end position="98"/>
    </location>
</feature>
<feature type="helix" evidence="3">
    <location>
        <begin position="104"/>
        <end position="127"/>
    </location>
</feature>
<feature type="strand" evidence="3">
    <location>
        <begin position="129"/>
        <end position="131"/>
    </location>
</feature>
<feature type="helix" evidence="3">
    <location>
        <begin position="137"/>
        <end position="141"/>
    </location>
</feature>
<feature type="helix" evidence="3">
    <location>
        <begin position="149"/>
        <end position="161"/>
    </location>
</feature>
<feature type="turn" evidence="3">
    <location>
        <begin position="179"/>
        <end position="182"/>
    </location>
</feature>
<feature type="strand" evidence="3">
    <location>
        <begin position="184"/>
        <end position="188"/>
    </location>
</feature>
<gene>
    <name type="primary">nleF</name>
    <name type="ordered locus">Z6020.1</name>
    <name type="ordered locus">ECs1815</name>
</gene>
<protein>
    <recommendedName>
        <fullName>Effector protein NleF</fullName>
    </recommendedName>
    <alternativeName>
        <fullName>Non-LEE-encoded type III effector F</fullName>
    </alternativeName>
</protein>
<reference key="1">
    <citation type="journal article" date="2001" name="Nature">
        <title>Genome sequence of enterohaemorrhagic Escherichia coli O157:H7.</title>
        <authorList>
            <person name="Perna N.T."/>
            <person name="Plunkett G. III"/>
            <person name="Burland V."/>
            <person name="Mau B."/>
            <person name="Glasner J.D."/>
            <person name="Rose D.J."/>
            <person name="Mayhew G.F."/>
            <person name="Evans P.S."/>
            <person name="Gregor J."/>
            <person name="Kirkpatrick H.A."/>
            <person name="Posfai G."/>
            <person name="Hackett J."/>
            <person name="Klink S."/>
            <person name="Boutin A."/>
            <person name="Shao Y."/>
            <person name="Miller L."/>
            <person name="Grotbeck E.J."/>
            <person name="Davis N.W."/>
            <person name="Lim A."/>
            <person name="Dimalanta E.T."/>
            <person name="Potamousis K."/>
            <person name="Apodaca J."/>
            <person name="Anantharaman T.S."/>
            <person name="Lin J."/>
            <person name="Yen G."/>
            <person name="Schwartz D.C."/>
            <person name="Welch R.A."/>
            <person name="Blattner F.R."/>
        </authorList>
    </citation>
    <scope>NUCLEOTIDE SEQUENCE [LARGE SCALE GENOMIC DNA]</scope>
    <source>
        <strain>O157:H7 / EDL933 / ATCC 700927 / EHEC</strain>
    </source>
</reference>
<reference key="2">
    <citation type="journal article" date="2001" name="DNA Res.">
        <title>Complete genome sequence of enterohemorrhagic Escherichia coli O157:H7 and genomic comparison with a laboratory strain K-12.</title>
        <authorList>
            <person name="Hayashi T."/>
            <person name="Makino K."/>
            <person name="Ohnishi M."/>
            <person name="Kurokawa K."/>
            <person name="Ishii K."/>
            <person name="Yokoyama K."/>
            <person name="Han C.-G."/>
            <person name="Ohtsubo E."/>
            <person name="Nakayama K."/>
            <person name="Murata T."/>
            <person name="Tanaka M."/>
            <person name="Tobe T."/>
            <person name="Iida T."/>
            <person name="Takami H."/>
            <person name="Honda T."/>
            <person name="Sasakawa C."/>
            <person name="Ogasawara N."/>
            <person name="Yasunaga T."/>
            <person name="Kuhara S."/>
            <person name="Shiba T."/>
            <person name="Hattori M."/>
            <person name="Shinagawa H."/>
        </authorList>
    </citation>
    <scope>NUCLEOTIDE SEQUENCE [LARGE SCALE GENOMIC DNA]</scope>
    <source>
        <strain>O157:H7 / Sakai / RIMD 0509952 / EHEC</strain>
    </source>
</reference>
<reference key="3">
    <citation type="journal article" date="2008" name="FEMS Microbiol. Lett.">
        <title>Characterization of the NleF effector protein from attaching and effacing bacterial pathogens.</title>
        <authorList>
            <person name="Echtenkamp F."/>
            <person name="Deng W."/>
            <person name="Wickham M.E."/>
            <person name="Vazquez A."/>
            <person name="Puente J.L."/>
            <person name="Thanabalasuriar A."/>
            <person name="Gruenheid S."/>
            <person name="Finlay B.B."/>
            <person name="Hardwidge P.R."/>
        </authorList>
    </citation>
    <scope>SUBCELLULAR LOCATION</scope>
    <scope>FUNCTION</scope>
    <source>
        <strain>O157:H7 / EDL933 / ATCC 700927 / EHEC</strain>
    </source>
</reference>
<reference key="4">
    <citation type="journal article" date="2013" name="PLoS ONE">
        <title>The E. coli effector protein NleF is a caspase inhibitor.</title>
        <authorList>
            <person name="Blasche S."/>
            <person name="Mortl M."/>
            <person name="Steuber H."/>
            <person name="Siszler G."/>
            <person name="Nisa S."/>
            <person name="Schwarz F."/>
            <person name="Lavrik I."/>
            <person name="Gronewold T.M."/>
            <person name="Maskos K."/>
            <person name="Donnenberg M.S."/>
            <person name="Ullmann D."/>
            <person name="Uetz P."/>
            <person name="Kogl M."/>
        </authorList>
    </citation>
    <scope>X-RAY CRYSTALLOGRAPHY (3.49 ANGSTROMS) IN COMPLEX WITH HUMAN CASP9</scope>
    <scope>INTERACTION WITH HUMAN CASP4; CASP8 AND CASP9</scope>
    <scope>FUNCTION</scope>
    <scope>SUBUNIT</scope>
    <scope>MUTAGENESIS OF 168-LEU--GLY-189 AND GLY-189</scope>
    <source>
        <strain>O157:H7 / Sakai / RIMD 0509952 / EHEC</strain>
    </source>
</reference>
<accession>Q8XAL7</accession>
<accession>Q7AEM9</accession>
<keyword id="KW-0002">3D-structure</keyword>
<keyword id="KW-1035">Host cytoplasm</keyword>
<keyword id="KW-0646">Protease inhibitor</keyword>
<keyword id="KW-1185">Reference proteome</keyword>
<keyword id="KW-0964">Secreted</keyword>